<comment type="function">
    <text evidence="1">Catalyzes the specific phosphorylation of the 3-hydroxyl group of shikimic acid using ATP as a cosubstrate.</text>
</comment>
<comment type="catalytic activity">
    <reaction evidence="1">
        <text>shikimate + ATP = 3-phosphoshikimate + ADP + H(+)</text>
        <dbReference type="Rhea" id="RHEA:13121"/>
        <dbReference type="ChEBI" id="CHEBI:15378"/>
        <dbReference type="ChEBI" id="CHEBI:30616"/>
        <dbReference type="ChEBI" id="CHEBI:36208"/>
        <dbReference type="ChEBI" id="CHEBI:145989"/>
        <dbReference type="ChEBI" id="CHEBI:456216"/>
        <dbReference type="EC" id="2.7.1.71"/>
    </reaction>
</comment>
<comment type="cofactor">
    <cofactor evidence="1">
        <name>Mg(2+)</name>
        <dbReference type="ChEBI" id="CHEBI:18420"/>
    </cofactor>
    <text evidence="1">Binds 1 Mg(2+) ion per subunit.</text>
</comment>
<comment type="pathway">
    <text evidence="1">Metabolic intermediate biosynthesis; chorismate biosynthesis; chorismate from D-erythrose 4-phosphate and phosphoenolpyruvate: step 5/7.</text>
</comment>
<comment type="subunit">
    <text evidence="1">Monomer.</text>
</comment>
<comment type="subcellular location">
    <subcellularLocation>
        <location evidence="1">Cytoplasm</location>
    </subcellularLocation>
</comment>
<comment type="similarity">
    <text evidence="1">Belongs to the shikimate kinase family.</text>
</comment>
<protein>
    <recommendedName>
        <fullName evidence="1">Shikimate kinase</fullName>
        <shortName evidence="1">SK</shortName>
        <ecNumber evidence="1">2.7.1.71</ecNumber>
    </recommendedName>
</protein>
<keyword id="KW-0028">Amino-acid biosynthesis</keyword>
<keyword id="KW-0057">Aromatic amino acid biosynthesis</keyword>
<keyword id="KW-0067">ATP-binding</keyword>
<keyword id="KW-0963">Cytoplasm</keyword>
<keyword id="KW-0418">Kinase</keyword>
<keyword id="KW-0460">Magnesium</keyword>
<keyword id="KW-0479">Metal-binding</keyword>
<keyword id="KW-0547">Nucleotide-binding</keyword>
<keyword id="KW-1185">Reference proteome</keyword>
<keyword id="KW-0808">Transferase</keyword>
<evidence type="ECO:0000255" key="1">
    <source>
        <dbReference type="HAMAP-Rule" id="MF_00109"/>
    </source>
</evidence>
<name>AROK_LACLA</name>
<reference key="1">
    <citation type="journal article" date="2001" name="Genome Res.">
        <title>The complete genome sequence of the lactic acid bacterium Lactococcus lactis ssp. lactis IL1403.</title>
        <authorList>
            <person name="Bolotin A."/>
            <person name="Wincker P."/>
            <person name="Mauger S."/>
            <person name="Jaillon O."/>
            <person name="Malarme K."/>
            <person name="Weissenbach J."/>
            <person name="Ehrlich S.D."/>
            <person name="Sorokin A."/>
        </authorList>
    </citation>
    <scope>NUCLEOTIDE SEQUENCE [LARGE SCALE GENOMIC DNA]</scope>
    <source>
        <strain>IL1403</strain>
    </source>
</reference>
<sequence>MSIILIGFMGAGKSTVAKLLTENFTDLDQLIEEEIEMTIAEFFELFGEADFRKIENEVFELALQKNIIIATGGGIIENPKNLEALDREAGVVFLTADFETLWERISMDLQNVRPLAQDKKAAQLLFEKRKNDYAKVADLTIDVTDKSPEQIVEEIREKWGIN</sequence>
<organism>
    <name type="scientific">Lactococcus lactis subsp. lactis (strain IL1403)</name>
    <name type="common">Streptococcus lactis</name>
    <dbReference type="NCBI Taxonomy" id="272623"/>
    <lineage>
        <taxon>Bacteria</taxon>
        <taxon>Bacillati</taxon>
        <taxon>Bacillota</taxon>
        <taxon>Bacilli</taxon>
        <taxon>Lactobacillales</taxon>
        <taxon>Streptococcaceae</taxon>
        <taxon>Lactococcus</taxon>
    </lineage>
</organism>
<accession>Q9CEU1</accession>
<feature type="chain" id="PRO_0000192389" description="Shikimate kinase">
    <location>
        <begin position="1"/>
        <end position="162"/>
    </location>
</feature>
<feature type="binding site" evidence="1">
    <location>
        <begin position="10"/>
        <end position="15"/>
    </location>
    <ligand>
        <name>ATP</name>
        <dbReference type="ChEBI" id="CHEBI:30616"/>
    </ligand>
</feature>
<feature type="binding site" evidence="1">
    <location>
        <position position="14"/>
    </location>
    <ligand>
        <name>Mg(2+)</name>
        <dbReference type="ChEBI" id="CHEBI:18420"/>
    </ligand>
</feature>
<feature type="binding site" evidence="1">
    <location>
        <position position="28"/>
    </location>
    <ligand>
        <name>substrate</name>
    </ligand>
</feature>
<feature type="binding site" evidence="1">
    <location>
        <position position="52"/>
    </location>
    <ligand>
        <name>substrate</name>
    </ligand>
</feature>
<feature type="binding site" evidence="1">
    <location>
        <position position="73"/>
    </location>
    <ligand>
        <name>substrate</name>
    </ligand>
</feature>
<feature type="binding site" evidence="1">
    <location>
        <position position="113"/>
    </location>
    <ligand>
        <name>ATP</name>
        <dbReference type="ChEBI" id="CHEBI:30616"/>
    </ligand>
</feature>
<feature type="binding site" evidence="1">
    <location>
        <position position="129"/>
    </location>
    <ligand>
        <name>substrate</name>
    </ligand>
</feature>
<gene>
    <name evidence="1" type="primary">aroK</name>
    <name type="ordered locus">LL1743</name>
    <name type="ORF">L0056</name>
</gene>
<proteinExistence type="inferred from homology"/>
<dbReference type="EC" id="2.7.1.71" evidence="1"/>
<dbReference type="EMBL" id="AE005176">
    <property type="protein sequence ID" value="AAK05841.1"/>
    <property type="molecule type" value="Genomic_DNA"/>
</dbReference>
<dbReference type="PIR" id="G86842">
    <property type="entry name" value="G86842"/>
</dbReference>
<dbReference type="RefSeq" id="NP_267899.1">
    <property type="nucleotide sequence ID" value="NC_002662.1"/>
</dbReference>
<dbReference type="RefSeq" id="WP_003132788.1">
    <property type="nucleotide sequence ID" value="NC_002662.1"/>
</dbReference>
<dbReference type="SMR" id="Q9CEU1"/>
<dbReference type="PaxDb" id="272623-L0056"/>
<dbReference type="EnsemblBacteria" id="AAK05841">
    <property type="protein sequence ID" value="AAK05841"/>
    <property type="gene ID" value="L0056"/>
</dbReference>
<dbReference type="KEGG" id="lla:L0056"/>
<dbReference type="PATRIC" id="fig|272623.7.peg.1869"/>
<dbReference type="eggNOG" id="COG0703">
    <property type="taxonomic scope" value="Bacteria"/>
</dbReference>
<dbReference type="HOGENOM" id="CLU_057607_4_3_9"/>
<dbReference type="OrthoDB" id="9800332at2"/>
<dbReference type="UniPathway" id="UPA00053">
    <property type="reaction ID" value="UER00088"/>
</dbReference>
<dbReference type="Proteomes" id="UP000002196">
    <property type="component" value="Chromosome"/>
</dbReference>
<dbReference type="GO" id="GO:0005829">
    <property type="term" value="C:cytosol"/>
    <property type="evidence" value="ECO:0007669"/>
    <property type="project" value="TreeGrafter"/>
</dbReference>
<dbReference type="GO" id="GO:0005524">
    <property type="term" value="F:ATP binding"/>
    <property type="evidence" value="ECO:0007669"/>
    <property type="project" value="UniProtKB-UniRule"/>
</dbReference>
<dbReference type="GO" id="GO:0000287">
    <property type="term" value="F:magnesium ion binding"/>
    <property type="evidence" value="ECO:0007669"/>
    <property type="project" value="UniProtKB-UniRule"/>
</dbReference>
<dbReference type="GO" id="GO:0004765">
    <property type="term" value="F:shikimate kinase activity"/>
    <property type="evidence" value="ECO:0007669"/>
    <property type="project" value="UniProtKB-UniRule"/>
</dbReference>
<dbReference type="GO" id="GO:0008652">
    <property type="term" value="P:amino acid biosynthetic process"/>
    <property type="evidence" value="ECO:0007669"/>
    <property type="project" value="UniProtKB-KW"/>
</dbReference>
<dbReference type="GO" id="GO:0009073">
    <property type="term" value="P:aromatic amino acid family biosynthetic process"/>
    <property type="evidence" value="ECO:0007669"/>
    <property type="project" value="UniProtKB-KW"/>
</dbReference>
<dbReference type="GO" id="GO:0009423">
    <property type="term" value="P:chorismate biosynthetic process"/>
    <property type="evidence" value="ECO:0007669"/>
    <property type="project" value="UniProtKB-UniRule"/>
</dbReference>
<dbReference type="CDD" id="cd00464">
    <property type="entry name" value="SK"/>
    <property type="match status" value="1"/>
</dbReference>
<dbReference type="Gene3D" id="3.40.50.300">
    <property type="entry name" value="P-loop containing nucleotide triphosphate hydrolases"/>
    <property type="match status" value="1"/>
</dbReference>
<dbReference type="HAMAP" id="MF_00109">
    <property type="entry name" value="Shikimate_kinase"/>
    <property type="match status" value="1"/>
</dbReference>
<dbReference type="InterPro" id="IPR027417">
    <property type="entry name" value="P-loop_NTPase"/>
</dbReference>
<dbReference type="InterPro" id="IPR031322">
    <property type="entry name" value="Shikimate/glucono_kinase"/>
</dbReference>
<dbReference type="InterPro" id="IPR000623">
    <property type="entry name" value="Shikimate_kinase/TSH1"/>
</dbReference>
<dbReference type="InterPro" id="IPR023000">
    <property type="entry name" value="Shikimate_kinase_CS"/>
</dbReference>
<dbReference type="PANTHER" id="PTHR21087">
    <property type="entry name" value="SHIKIMATE KINASE"/>
    <property type="match status" value="1"/>
</dbReference>
<dbReference type="PANTHER" id="PTHR21087:SF16">
    <property type="entry name" value="SHIKIMATE KINASE 1, CHLOROPLASTIC"/>
    <property type="match status" value="1"/>
</dbReference>
<dbReference type="Pfam" id="PF01202">
    <property type="entry name" value="SKI"/>
    <property type="match status" value="1"/>
</dbReference>
<dbReference type="PRINTS" id="PR01100">
    <property type="entry name" value="SHIKIMTKNASE"/>
</dbReference>
<dbReference type="SUPFAM" id="SSF52540">
    <property type="entry name" value="P-loop containing nucleoside triphosphate hydrolases"/>
    <property type="match status" value="1"/>
</dbReference>
<dbReference type="PROSITE" id="PS01128">
    <property type="entry name" value="SHIKIMATE_KINASE"/>
    <property type="match status" value="1"/>
</dbReference>